<dbReference type="EC" id="6.3.4.5" evidence="1"/>
<dbReference type="EMBL" id="CP000377">
    <property type="protein sequence ID" value="ABF65615.1"/>
    <property type="molecule type" value="Genomic_DNA"/>
</dbReference>
<dbReference type="RefSeq" id="WP_011540196.1">
    <property type="nucleotide sequence ID" value="NC_008044.1"/>
</dbReference>
<dbReference type="SMR" id="Q1GCK1"/>
<dbReference type="STRING" id="292414.TM1040_2883"/>
<dbReference type="KEGG" id="sit:TM1040_2883"/>
<dbReference type="eggNOG" id="COG0137">
    <property type="taxonomic scope" value="Bacteria"/>
</dbReference>
<dbReference type="HOGENOM" id="CLU_032784_4_2_5"/>
<dbReference type="OrthoDB" id="9801641at2"/>
<dbReference type="UniPathway" id="UPA00068">
    <property type="reaction ID" value="UER00113"/>
</dbReference>
<dbReference type="Proteomes" id="UP000000636">
    <property type="component" value="Chromosome"/>
</dbReference>
<dbReference type="GO" id="GO:0005737">
    <property type="term" value="C:cytoplasm"/>
    <property type="evidence" value="ECO:0007669"/>
    <property type="project" value="UniProtKB-SubCell"/>
</dbReference>
<dbReference type="GO" id="GO:0004055">
    <property type="term" value="F:argininosuccinate synthase activity"/>
    <property type="evidence" value="ECO:0007669"/>
    <property type="project" value="UniProtKB-UniRule"/>
</dbReference>
<dbReference type="GO" id="GO:0005524">
    <property type="term" value="F:ATP binding"/>
    <property type="evidence" value="ECO:0007669"/>
    <property type="project" value="UniProtKB-UniRule"/>
</dbReference>
<dbReference type="GO" id="GO:0000053">
    <property type="term" value="P:argininosuccinate metabolic process"/>
    <property type="evidence" value="ECO:0007669"/>
    <property type="project" value="TreeGrafter"/>
</dbReference>
<dbReference type="GO" id="GO:0006526">
    <property type="term" value="P:L-arginine biosynthetic process"/>
    <property type="evidence" value="ECO:0007669"/>
    <property type="project" value="UniProtKB-UniRule"/>
</dbReference>
<dbReference type="GO" id="GO:0000050">
    <property type="term" value="P:urea cycle"/>
    <property type="evidence" value="ECO:0007669"/>
    <property type="project" value="TreeGrafter"/>
</dbReference>
<dbReference type="CDD" id="cd01999">
    <property type="entry name" value="ASS"/>
    <property type="match status" value="1"/>
</dbReference>
<dbReference type="FunFam" id="3.40.50.620:FF:000019">
    <property type="entry name" value="Argininosuccinate synthase"/>
    <property type="match status" value="1"/>
</dbReference>
<dbReference type="FunFam" id="3.90.1260.10:FF:000007">
    <property type="entry name" value="Argininosuccinate synthase"/>
    <property type="match status" value="1"/>
</dbReference>
<dbReference type="Gene3D" id="3.90.1260.10">
    <property type="entry name" value="Argininosuccinate synthetase, chain A, domain 2"/>
    <property type="match status" value="1"/>
</dbReference>
<dbReference type="Gene3D" id="3.40.50.620">
    <property type="entry name" value="HUPs"/>
    <property type="match status" value="1"/>
</dbReference>
<dbReference type="Gene3D" id="1.20.5.470">
    <property type="entry name" value="Single helix bin"/>
    <property type="match status" value="1"/>
</dbReference>
<dbReference type="HAMAP" id="MF_00005">
    <property type="entry name" value="Arg_succ_synth_type1"/>
    <property type="match status" value="1"/>
</dbReference>
<dbReference type="InterPro" id="IPR048268">
    <property type="entry name" value="Arginosuc_syn_C"/>
</dbReference>
<dbReference type="InterPro" id="IPR048267">
    <property type="entry name" value="Arginosuc_syn_N"/>
</dbReference>
<dbReference type="InterPro" id="IPR001518">
    <property type="entry name" value="Arginosuc_synth"/>
</dbReference>
<dbReference type="InterPro" id="IPR018223">
    <property type="entry name" value="Arginosuc_synth_CS"/>
</dbReference>
<dbReference type="InterPro" id="IPR023434">
    <property type="entry name" value="Arginosuc_synth_type_1_subfam"/>
</dbReference>
<dbReference type="InterPro" id="IPR024074">
    <property type="entry name" value="AS_cat/multimer_dom_body"/>
</dbReference>
<dbReference type="InterPro" id="IPR014729">
    <property type="entry name" value="Rossmann-like_a/b/a_fold"/>
</dbReference>
<dbReference type="NCBIfam" id="TIGR00032">
    <property type="entry name" value="argG"/>
    <property type="match status" value="1"/>
</dbReference>
<dbReference type="NCBIfam" id="NF001770">
    <property type="entry name" value="PRK00509.1"/>
    <property type="match status" value="1"/>
</dbReference>
<dbReference type="PANTHER" id="PTHR11587">
    <property type="entry name" value="ARGININOSUCCINATE SYNTHASE"/>
    <property type="match status" value="1"/>
</dbReference>
<dbReference type="PANTHER" id="PTHR11587:SF2">
    <property type="entry name" value="ARGININOSUCCINATE SYNTHASE"/>
    <property type="match status" value="1"/>
</dbReference>
<dbReference type="Pfam" id="PF20979">
    <property type="entry name" value="Arginosuc_syn_C"/>
    <property type="match status" value="1"/>
</dbReference>
<dbReference type="Pfam" id="PF00764">
    <property type="entry name" value="Arginosuc_synth"/>
    <property type="match status" value="1"/>
</dbReference>
<dbReference type="SUPFAM" id="SSF52402">
    <property type="entry name" value="Adenine nucleotide alpha hydrolases-like"/>
    <property type="match status" value="1"/>
</dbReference>
<dbReference type="SUPFAM" id="SSF69864">
    <property type="entry name" value="Argininosuccinate synthetase, C-terminal domain"/>
    <property type="match status" value="1"/>
</dbReference>
<dbReference type="PROSITE" id="PS00564">
    <property type="entry name" value="ARGININOSUCCIN_SYN_1"/>
    <property type="match status" value="1"/>
</dbReference>
<dbReference type="PROSITE" id="PS00565">
    <property type="entry name" value="ARGININOSUCCIN_SYN_2"/>
    <property type="match status" value="1"/>
</dbReference>
<proteinExistence type="inferred from homology"/>
<comment type="catalytic activity">
    <reaction evidence="1">
        <text>L-citrulline + L-aspartate + ATP = 2-(N(omega)-L-arginino)succinate + AMP + diphosphate + H(+)</text>
        <dbReference type="Rhea" id="RHEA:10932"/>
        <dbReference type="ChEBI" id="CHEBI:15378"/>
        <dbReference type="ChEBI" id="CHEBI:29991"/>
        <dbReference type="ChEBI" id="CHEBI:30616"/>
        <dbReference type="ChEBI" id="CHEBI:33019"/>
        <dbReference type="ChEBI" id="CHEBI:57472"/>
        <dbReference type="ChEBI" id="CHEBI:57743"/>
        <dbReference type="ChEBI" id="CHEBI:456215"/>
        <dbReference type="EC" id="6.3.4.5"/>
    </reaction>
</comment>
<comment type="pathway">
    <text evidence="1">Amino-acid biosynthesis; L-arginine biosynthesis; L-arginine from L-ornithine and carbamoyl phosphate: step 2/3.</text>
</comment>
<comment type="subunit">
    <text evidence="1">Homotetramer.</text>
</comment>
<comment type="subcellular location">
    <subcellularLocation>
        <location evidence="1">Cytoplasm</location>
    </subcellularLocation>
</comment>
<comment type="similarity">
    <text evidence="1">Belongs to the argininosuccinate synthase family. Type 1 subfamily.</text>
</comment>
<evidence type="ECO:0000255" key="1">
    <source>
        <dbReference type="HAMAP-Rule" id="MF_00005"/>
    </source>
</evidence>
<gene>
    <name evidence="1" type="primary">argG</name>
    <name type="ordered locus">TM1040_2883</name>
</gene>
<feature type="chain" id="PRO_0000263973" description="Argininosuccinate synthase">
    <location>
        <begin position="1"/>
        <end position="407"/>
    </location>
</feature>
<feature type="binding site" evidence="1">
    <location>
        <begin position="10"/>
        <end position="18"/>
    </location>
    <ligand>
        <name>ATP</name>
        <dbReference type="ChEBI" id="CHEBI:30616"/>
    </ligand>
</feature>
<feature type="binding site" evidence="1">
    <location>
        <position position="37"/>
    </location>
    <ligand>
        <name>ATP</name>
        <dbReference type="ChEBI" id="CHEBI:30616"/>
    </ligand>
</feature>
<feature type="binding site" evidence="1">
    <location>
        <position position="90"/>
    </location>
    <ligand>
        <name>L-citrulline</name>
        <dbReference type="ChEBI" id="CHEBI:57743"/>
    </ligand>
</feature>
<feature type="binding site" evidence="1">
    <location>
        <position position="95"/>
    </location>
    <ligand>
        <name>L-citrulline</name>
        <dbReference type="ChEBI" id="CHEBI:57743"/>
    </ligand>
</feature>
<feature type="binding site" evidence="1">
    <location>
        <position position="120"/>
    </location>
    <ligand>
        <name>ATP</name>
        <dbReference type="ChEBI" id="CHEBI:30616"/>
    </ligand>
</feature>
<feature type="binding site" evidence="1">
    <location>
        <position position="122"/>
    </location>
    <ligand>
        <name>L-aspartate</name>
        <dbReference type="ChEBI" id="CHEBI:29991"/>
    </ligand>
</feature>
<feature type="binding site" evidence="1">
    <location>
        <position position="126"/>
    </location>
    <ligand>
        <name>L-aspartate</name>
        <dbReference type="ChEBI" id="CHEBI:29991"/>
    </ligand>
</feature>
<feature type="binding site" evidence="1">
    <location>
        <position position="126"/>
    </location>
    <ligand>
        <name>L-citrulline</name>
        <dbReference type="ChEBI" id="CHEBI:57743"/>
    </ligand>
</feature>
<feature type="binding site" evidence="1">
    <location>
        <position position="127"/>
    </location>
    <ligand>
        <name>L-aspartate</name>
        <dbReference type="ChEBI" id="CHEBI:29991"/>
    </ligand>
</feature>
<feature type="binding site" evidence="1">
    <location>
        <position position="130"/>
    </location>
    <ligand>
        <name>L-citrulline</name>
        <dbReference type="ChEBI" id="CHEBI:57743"/>
    </ligand>
</feature>
<feature type="binding site" evidence="1">
    <location>
        <position position="181"/>
    </location>
    <ligand>
        <name>L-citrulline</name>
        <dbReference type="ChEBI" id="CHEBI:57743"/>
    </ligand>
</feature>
<feature type="binding site" evidence="1">
    <location>
        <position position="190"/>
    </location>
    <ligand>
        <name>L-citrulline</name>
        <dbReference type="ChEBI" id="CHEBI:57743"/>
    </ligand>
</feature>
<feature type="binding site" evidence="1">
    <location>
        <position position="266"/>
    </location>
    <ligand>
        <name>L-citrulline</name>
        <dbReference type="ChEBI" id="CHEBI:57743"/>
    </ligand>
</feature>
<feature type="binding site" evidence="1">
    <location>
        <position position="278"/>
    </location>
    <ligand>
        <name>L-citrulline</name>
        <dbReference type="ChEBI" id="CHEBI:57743"/>
    </ligand>
</feature>
<organism>
    <name type="scientific">Ruegeria sp. (strain TM1040)</name>
    <name type="common">Silicibacter sp.</name>
    <dbReference type="NCBI Taxonomy" id="292414"/>
    <lineage>
        <taxon>Bacteria</taxon>
        <taxon>Pseudomonadati</taxon>
        <taxon>Pseudomonadota</taxon>
        <taxon>Alphaproteobacteria</taxon>
        <taxon>Rhodobacterales</taxon>
        <taxon>Roseobacteraceae</taxon>
        <taxon>Ruegeria</taxon>
    </lineage>
</organism>
<protein>
    <recommendedName>
        <fullName evidence="1">Argininosuccinate synthase</fullName>
        <ecNumber evidence="1">6.3.4.5</ecNumber>
    </recommendedName>
    <alternativeName>
        <fullName evidence="1">Citrulline--aspartate ligase</fullName>
    </alternativeName>
</protein>
<keyword id="KW-0028">Amino-acid biosynthesis</keyword>
<keyword id="KW-0055">Arginine biosynthesis</keyword>
<keyword id="KW-0067">ATP-binding</keyword>
<keyword id="KW-0963">Cytoplasm</keyword>
<keyword id="KW-0436">Ligase</keyword>
<keyword id="KW-0547">Nucleotide-binding</keyword>
<keyword id="KW-1185">Reference proteome</keyword>
<sequence length="407" mass="45385">MSAPKKVVLAYSGGLDTSIILKWLQTEYGCEVVTFTADLGQGEELEPARKKAELLGIKPENIFIEDIREEFVRDFVFPMFRANAVYEGLYLLGTSIARPLISKRLVEIAEATGADAVSHGATGKGNDQVRFELSAYALNPDIKVIAPWREWDLTSRTKLLEFAEANQIPIAKDKRGEAPFSVDANLLHTSSEGKVLEDPAEMAPDYVYQRTVNPEDAPNEPEFIEITFEKGDAVAINGEAMSPATILTKLNEYGRKHGIGRLDFVENRFVGMKSRGIYEAPGGDILLEAHRGIEQITLDSGAGHLKDSIMPRYAELIYNGFWYSPEREMLQALIDESQKHVTGTVRVKLYKGSAKTVGRWSEHSLYSEAHVTFEEDAGAYDQKDAQGFIQLNALRLKLLAARNRRVK</sequence>
<accession>Q1GCK1</accession>
<reference key="1">
    <citation type="submission" date="2006-05" db="EMBL/GenBank/DDBJ databases">
        <title>Complete sequence of chromosome of Silicibacter sp. TM1040.</title>
        <authorList>
            <consortium name="US DOE Joint Genome Institute"/>
            <person name="Copeland A."/>
            <person name="Lucas S."/>
            <person name="Lapidus A."/>
            <person name="Barry K."/>
            <person name="Detter J.C."/>
            <person name="Glavina del Rio T."/>
            <person name="Hammon N."/>
            <person name="Israni S."/>
            <person name="Dalin E."/>
            <person name="Tice H."/>
            <person name="Pitluck S."/>
            <person name="Brettin T."/>
            <person name="Bruce D."/>
            <person name="Han C."/>
            <person name="Tapia R."/>
            <person name="Goodwin L."/>
            <person name="Thompson L.S."/>
            <person name="Gilna P."/>
            <person name="Schmutz J."/>
            <person name="Larimer F."/>
            <person name="Land M."/>
            <person name="Hauser L."/>
            <person name="Kyrpides N."/>
            <person name="Kim E."/>
            <person name="Belas R."/>
            <person name="Moran M.A."/>
            <person name="Buchan A."/>
            <person name="Gonzalez J.M."/>
            <person name="Schell M.A."/>
            <person name="Sun F."/>
            <person name="Richardson P."/>
        </authorList>
    </citation>
    <scope>NUCLEOTIDE SEQUENCE [LARGE SCALE GENOMIC DNA]</scope>
    <source>
        <strain>TM1040</strain>
    </source>
</reference>
<name>ASSY_RUEST</name>